<name>TARS_RHISY</name>
<proteinExistence type="evidence at protein level"/>
<accession>A8C981</accession>
<protein>
    <recommendedName>
        <fullName evidence="5">Taraxerol synthase</fullName>
        <ecNumber evidence="2">5.4.99.35</ecNumber>
    </recommendedName>
    <alternativeName>
        <fullName evidence="3">Oxidosqualene cyclase RsM2</fullName>
    </alternativeName>
</protein>
<evidence type="ECO:0000250" key="1">
    <source>
        <dbReference type="UniProtKB" id="P48449"/>
    </source>
</evidence>
<evidence type="ECO:0000269" key="2">
    <source>
    </source>
</evidence>
<evidence type="ECO:0000303" key="3">
    <source>
    </source>
</evidence>
<evidence type="ECO:0000305" key="4"/>
<evidence type="ECO:0000305" key="5">
    <source>
    </source>
</evidence>
<dbReference type="EC" id="5.4.99.35" evidence="2"/>
<dbReference type="EMBL" id="AB263204">
    <property type="protein sequence ID" value="BAF80442.1"/>
    <property type="molecule type" value="mRNA"/>
</dbReference>
<dbReference type="SMR" id="A8C981"/>
<dbReference type="KEGG" id="ag:BAF80442"/>
<dbReference type="BioCyc" id="MetaCyc:MONOMER-14454"/>
<dbReference type="BRENDA" id="5.4.99.35">
    <property type="organism ID" value="5362"/>
</dbReference>
<dbReference type="GO" id="GO:0005811">
    <property type="term" value="C:lipid droplet"/>
    <property type="evidence" value="ECO:0007669"/>
    <property type="project" value="InterPro"/>
</dbReference>
<dbReference type="GO" id="GO:0042300">
    <property type="term" value="F:beta-amyrin synthase activity"/>
    <property type="evidence" value="ECO:0007669"/>
    <property type="project" value="RHEA"/>
</dbReference>
<dbReference type="GO" id="GO:0042299">
    <property type="term" value="F:lupeol synthase activity"/>
    <property type="evidence" value="ECO:0007669"/>
    <property type="project" value="RHEA"/>
</dbReference>
<dbReference type="GO" id="GO:0016104">
    <property type="term" value="P:triterpenoid biosynthetic process"/>
    <property type="evidence" value="ECO:0007669"/>
    <property type="project" value="InterPro"/>
</dbReference>
<dbReference type="CDD" id="cd02892">
    <property type="entry name" value="SQCY_1"/>
    <property type="match status" value="1"/>
</dbReference>
<dbReference type="FunFam" id="1.50.10.20:FF:000011">
    <property type="entry name" value="Terpene cyclase/mutase family member"/>
    <property type="match status" value="1"/>
</dbReference>
<dbReference type="Gene3D" id="1.50.10.20">
    <property type="match status" value="2"/>
</dbReference>
<dbReference type="InterPro" id="IPR032696">
    <property type="entry name" value="SQ_cyclase_C"/>
</dbReference>
<dbReference type="InterPro" id="IPR032697">
    <property type="entry name" value="SQ_cyclase_N"/>
</dbReference>
<dbReference type="InterPro" id="IPR018333">
    <property type="entry name" value="Squalene_cyclase"/>
</dbReference>
<dbReference type="InterPro" id="IPR008930">
    <property type="entry name" value="Terpenoid_cyclase/PrenylTrfase"/>
</dbReference>
<dbReference type="NCBIfam" id="TIGR01787">
    <property type="entry name" value="squalene_cyclas"/>
    <property type="match status" value="1"/>
</dbReference>
<dbReference type="PANTHER" id="PTHR11764:SF58">
    <property type="entry name" value="BETA-AMYRIN SYNTHASE-RELATED"/>
    <property type="match status" value="1"/>
</dbReference>
<dbReference type="PANTHER" id="PTHR11764">
    <property type="entry name" value="TERPENE CYCLASE/MUTASE FAMILY MEMBER"/>
    <property type="match status" value="1"/>
</dbReference>
<dbReference type="Pfam" id="PF13243">
    <property type="entry name" value="SQHop_cyclase_C"/>
    <property type="match status" value="1"/>
</dbReference>
<dbReference type="Pfam" id="PF13249">
    <property type="entry name" value="SQHop_cyclase_N"/>
    <property type="match status" value="1"/>
</dbReference>
<dbReference type="SFLD" id="SFLDG01016">
    <property type="entry name" value="Prenyltransferase_Like_2"/>
    <property type="match status" value="1"/>
</dbReference>
<dbReference type="SUPFAM" id="SSF48239">
    <property type="entry name" value="Terpenoid cyclases/Protein prenyltransferases"/>
    <property type="match status" value="2"/>
</dbReference>
<organism>
    <name type="scientific">Rhizophora stylosa</name>
    <name type="common">Bakau</name>
    <name type="synonym">Red mangrove</name>
    <dbReference type="NCBI Taxonomy" id="98588"/>
    <lineage>
        <taxon>Eukaryota</taxon>
        <taxon>Viridiplantae</taxon>
        <taxon>Streptophyta</taxon>
        <taxon>Embryophyta</taxon>
        <taxon>Tracheophyta</taxon>
        <taxon>Spermatophyta</taxon>
        <taxon>Magnoliopsida</taxon>
        <taxon>eudicotyledons</taxon>
        <taxon>Gunneridae</taxon>
        <taxon>Pentapetalae</taxon>
        <taxon>rosids</taxon>
        <taxon>fabids</taxon>
        <taxon>Malpighiales</taxon>
        <taxon>Rhizophoraceae</taxon>
        <taxon>Rhizophora</taxon>
    </lineage>
</organism>
<gene>
    <name type="primary">M2</name>
</gene>
<comment type="function">
    <text evidence="2">Multifunctional triterpene synthase producing taraxerol, beta-amyrin and lupeol in the ratio 70:17:13.</text>
</comment>
<comment type="catalytic activity">
    <reaction evidence="2">
        <text>(S)-2,3-epoxysqualene = taraxerol</text>
        <dbReference type="Rhea" id="RHEA:30431"/>
        <dbReference type="ChEBI" id="CHEBI:9402"/>
        <dbReference type="ChEBI" id="CHEBI:15441"/>
        <dbReference type="EC" id="5.4.99.35"/>
    </reaction>
    <physiologicalReaction direction="left-to-right" evidence="5">
        <dbReference type="Rhea" id="RHEA:30432"/>
    </physiologicalReaction>
</comment>
<comment type="catalytic activity">
    <reaction evidence="2">
        <text>(S)-2,3-epoxysqualene = beta-amyrin</text>
        <dbReference type="Rhea" id="RHEA:31007"/>
        <dbReference type="ChEBI" id="CHEBI:10352"/>
        <dbReference type="ChEBI" id="CHEBI:15441"/>
    </reaction>
    <physiologicalReaction direction="left-to-right" evidence="5">
        <dbReference type="Rhea" id="RHEA:31008"/>
    </physiologicalReaction>
</comment>
<comment type="catalytic activity">
    <reaction evidence="2">
        <text>(S)-2,3-epoxysqualene = lupeol</text>
        <dbReference type="Rhea" id="RHEA:31383"/>
        <dbReference type="ChEBI" id="CHEBI:6570"/>
        <dbReference type="ChEBI" id="CHEBI:15441"/>
    </reaction>
    <physiologicalReaction direction="left-to-right" evidence="5">
        <dbReference type="Rhea" id="RHEA:31384"/>
    </physiologicalReaction>
</comment>
<comment type="pathway">
    <text evidence="5">Terpene metabolism.</text>
</comment>
<comment type="similarity">
    <text evidence="4">Belongs to the terpene cyclase/mutase family.</text>
</comment>
<reference key="1">
    <citation type="journal article" date="2007" name="FEBS J.">
        <title>Triterpene synthases from the Okinawan mangrove tribe, Rhizophoraceae.</title>
        <authorList>
            <person name="Basyuni M."/>
            <person name="Oku H."/>
            <person name="Tsujimoto E."/>
            <person name="Kinjo K."/>
            <person name="Baba S."/>
            <person name="Takara K."/>
        </authorList>
    </citation>
    <scope>NUCLEOTIDE SEQUENCE [MRNA]</scope>
    <scope>FUNCTION</scope>
    <scope>CATALYTIC ACTIVITY</scope>
    <source>
        <tissue>Leaf</tissue>
    </source>
</reference>
<sequence length="771" mass="87831">MGVWRLKIGEGANNPYLTSTNNFVGRQTWVFEPDGGTPEERDQVEEARQNYFKNRFRVRPCSDLLWQMQFLREKNFRQKIPQVKVRDGEEINYETVTNAIRRSAHYLSATQSSDGFWPADASAPVFYLAPWVIGLYVIGHLNTVFPAEHQKEILRYIYCHQNEDGGWGLHYEDGGTMFGTAFNYVCMRILGEGPGGGRDNACERARKGILDHGGVTYIPSGGKTWLAMLGVFDWSGCNPMPPEFWMLPPFFPMHPAQMWCYCRIVYMPMSYLYGRRFVGPITPLVQQLREELHTQPFHEIEWSKARHLCAKEDLFHRRPWIQELFWDCLHTFAEPLLTRWPLNNFIREKALKITMEHVHYDDKASHYINPGSVEKVICMVACWVEDPSGEPFQRHLARISDYVWIAEDGMRITGIGSQTWDAALSIQALIACNLIEEMGPTLKKGYDFLKNSQAKDNPPGDFKRMYRHFGKGAWAFSSQDYGVIALDCTAESLMCCLHFSMMPPEIVGEKLEPEKLYLAVDFILSLQSKNGGLTCWEPARGGKWLEVLNPLEFFENIVVEHEYVEVTASAINALVMFKKRYPGYREKEIEHFISKAVHYLIQTQFPNGPWYGVWGICFMYGTYFALKGLAAAGNTYANCPAIPKAVDFLLKTQCQDGGWGESYLSGTTKVYTPLEGNRSNLVQTAWALMGLIHSGQAERDPTPLHRSAKLLINSQTSDGDFPQQDSTGLLKGSCAMHYAAYRNIFPLWALAAYRTHVLGLTSKAHSSAVME</sequence>
<keyword id="KW-0413">Isomerase</keyword>
<keyword id="KW-0677">Repeat</keyword>
<feature type="chain" id="PRO_0000412988" description="Taraxerol synthase">
    <location>
        <begin position="1"/>
        <end position="771"/>
    </location>
</feature>
<feature type="repeat" description="PFTB 1">
    <location>
        <begin position="150"/>
        <end position="191"/>
    </location>
</feature>
<feature type="repeat" description="PFTB 2">
    <location>
        <begin position="516"/>
        <end position="561"/>
    </location>
</feature>
<feature type="repeat" description="PFTB 3">
    <location>
        <begin position="642"/>
        <end position="683"/>
    </location>
</feature>
<feature type="active site" description="Proton donor" evidence="1">
    <location>
        <position position="487"/>
    </location>
</feature>